<comment type="function">
    <text evidence="1">Cell surface-associated calcium-binding protein which plays an important role in adhesion and pathogenesis. Mediates interactions with components of the extracellular matrix such as host NRXN1 to promote bacterial adhesion.</text>
</comment>
<comment type="subunit">
    <text evidence="1">Homodimerizes; via N2-Domain. Interacts with host NRXN1; this interaction mediates bacterial attachment to host cells.</text>
</comment>
<comment type="subcellular location">
    <subcellularLocation>
        <location evidence="3">Secreted</location>
        <location evidence="3">Cell wall</location>
        <topology evidence="3">Peptidoglycan-anchor</topology>
    </subcellularLocation>
</comment>
<comment type="similarity">
    <text evidence="5">Belongs to the serine-aspartate repeat-containing protein (SDr) family.</text>
</comment>
<protein>
    <recommendedName>
        <fullName>Serine-aspartate repeat-containing protein C</fullName>
    </recommendedName>
</protein>
<reference key="1">
    <citation type="journal article" date="2002" name="Lancet">
        <title>Genome and virulence determinants of high virulence community-acquired MRSA.</title>
        <authorList>
            <person name="Baba T."/>
            <person name="Takeuchi F."/>
            <person name="Kuroda M."/>
            <person name="Yuzawa H."/>
            <person name="Aoki K."/>
            <person name="Oguchi A."/>
            <person name="Nagai Y."/>
            <person name="Iwama N."/>
            <person name="Asano K."/>
            <person name="Naimi T."/>
            <person name="Kuroda H."/>
            <person name="Cui L."/>
            <person name="Yamamoto K."/>
            <person name="Hiramatsu K."/>
        </authorList>
    </citation>
    <scope>NUCLEOTIDE SEQUENCE [LARGE SCALE GENOMIC DNA]</scope>
    <source>
        <strain>MW2</strain>
    </source>
</reference>
<sequence length="955" mass="103642">MNNKKTVTNRKGMIPNRLNKFSIRKYSVGTASILVGTTLIFGLSGHEAKAAEHTNGELNQSKNETTAPSENKTTEKVDSHQLKDNTQTATADQPKVTMSDSATFKETSSNMQSPQNATASQSTTQTSNVTTNDKSSTTYSNETDKSNLTQAKDVSATPKTTTIKPRTLNRMAVNTVAAPQQGTNVNDKVHFSNIDIAIDKGHLNKDTGKTEFWATSSDVLKLKANYTIDDSVKEGDTFTFKYGQYFRPGSVRLPSQTQNLYNAQGNIIAKGIYDSTTNTTTYTFTNYVDQYTNVSGSFEQVAFAKRENATTDKTAYKMEVSLGNDTYSEEIIVDYGNKKAQPLISSTNYINNEDLSRNMTAYVNQPKNTYTKQTFVTNLTGYKFNPNAKNFKIYEVTDQNQFVDSFTPDTSKLKDVTNQFNITYSNDNKTATVDLMNGQTSSNKQYIIQQVAYPDNTSTDNGKIDYTLDTDKTKYSWSNSYSNVNGSSTANGDQKKYNLGDYVWEDTNKDGKQDANEKGIKGVYVILKDSNGKELDRTTTDENGKYQFTGLSNGTYSVEFSTPAGYTPTTANAGTDDAVDSDGLTTTGVIKDADNMTLDSGFYKTPKYSLGDYVWYDSNKDGKQDSTEKGIKGVKVTLQNEKGEVIGTTETDENGKYRFDNLDSGKYKVIFEKPAGLTQTGTNTTEDDKDADGGEVDVTITDHDDFTLDNGYYEEETSDSDSDSDSDSDSDSDSDSDSDSDSDSDSDSDSDSDSDSDSDSDSDSDSDSDSDSDSDSDSDSDSDSDSDSDSDSDSDSDSDSDSDSDSDSDSDSDSDSDSDSDSDSDSDSDSDTDSDSDSDSDSDSDSDSDSDSDSDSDSDSDSDSDSDSDSDSDSDSDSDSDSESDADSDTDSDSDAGKHTPAKPMSTVKDQHKTAKALPETGSENNNSNNGTLFGGLFAALGSLLLFGRRKKQNK</sequence>
<proteinExistence type="inferred from homology"/>
<organism>
    <name type="scientific">Staphylococcus aureus (strain MW2)</name>
    <dbReference type="NCBI Taxonomy" id="196620"/>
    <lineage>
        <taxon>Bacteria</taxon>
        <taxon>Bacillati</taxon>
        <taxon>Bacillota</taxon>
        <taxon>Bacilli</taxon>
        <taxon>Bacillales</taxon>
        <taxon>Staphylococcaceae</taxon>
        <taxon>Staphylococcus</taxon>
    </lineage>
</organism>
<accession>Q8NXX7</accession>
<evidence type="ECO:0000250" key="1">
    <source>
        <dbReference type="UniProtKB" id="O86487"/>
    </source>
</evidence>
<evidence type="ECO:0000255" key="2"/>
<evidence type="ECO:0000255" key="3">
    <source>
        <dbReference type="PROSITE-ProRule" id="PRU00477"/>
    </source>
</evidence>
<evidence type="ECO:0000256" key="4">
    <source>
        <dbReference type="SAM" id="MobiDB-lite"/>
    </source>
</evidence>
<evidence type="ECO:0000305" key="5"/>
<name>SDRC_STAAW</name>
<feature type="signal peptide" evidence="2">
    <location>
        <begin position="1"/>
        <end position="50"/>
    </location>
</feature>
<feature type="chain" id="PRO_0000281400" description="Serine-aspartate repeat-containing protein C">
    <location>
        <begin position="51"/>
        <end position="921"/>
    </location>
</feature>
<feature type="propeptide" id="PRO_0000281401" description="Removed by sortase" evidence="3">
    <location>
        <begin position="922"/>
        <end position="955"/>
    </location>
</feature>
<feature type="domain" description="CNA-B 1">
    <location>
        <begin position="496"/>
        <end position="606"/>
    </location>
</feature>
<feature type="domain" description="CNA-B 2">
    <location>
        <begin position="607"/>
        <end position="717"/>
    </location>
</feature>
<feature type="region of interest" description="Ligand binding A region">
    <location>
        <begin position="51"/>
        <end position="495"/>
    </location>
</feature>
<feature type="region of interest" description="Disordered" evidence="4">
    <location>
        <begin position="51"/>
        <end position="166"/>
    </location>
</feature>
<feature type="region of interest" description="Disordered" evidence="4">
    <location>
        <begin position="678"/>
        <end position="935"/>
    </location>
</feature>
<feature type="short sequence motif" description="LPXTG sorting signal" evidence="3">
    <location>
        <begin position="918"/>
        <end position="922"/>
    </location>
</feature>
<feature type="compositionally biased region" description="Polar residues" evidence="4">
    <location>
        <begin position="56"/>
        <end position="71"/>
    </location>
</feature>
<feature type="compositionally biased region" description="Basic and acidic residues" evidence="4">
    <location>
        <begin position="72"/>
        <end position="83"/>
    </location>
</feature>
<feature type="compositionally biased region" description="Polar residues" evidence="4">
    <location>
        <begin position="84"/>
        <end position="114"/>
    </location>
</feature>
<feature type="compositionally biased region" description="Low complexity" evidence="4">
    <location>
        <begin position="115"/>
        <end position="132"/>
    </location>
</feature>
<feature type="compositionally biased region" description="Polar residues" evidence="4">
    <location>
        <begin position="133"/>
        <end position="164"/>
    </location>
</feature>
<feature type="compositionally biased region" description="Acidic residues" evidence="4">
    <location>
        <begin position="685"/>
        <end position="695"/>
    </location>
</feature>
<feature type="compositionally biased region" description="Acidic residues" evidence="4">
    <location>
        <begin position="712"/>
        <end position="894"/>
    </location>
</feature>
<feature type="compositionally biased region" description="Low complexity" evidence="4">
    <location>
        <begin position="920"/>
        <end position="935"/>
    </location>
</feature>
<feature type="modified residue" description="Pentaglycyl murein peptidoglycan amidated threonine" evidence="3">
    <location>
        <position position="921"/>
    </location>
</feature>
<dbReference type="EMBL" id="BA000033">
    <property type="protein sequence ID" value="BAB94381.1"/>
    <property type="molecule type" value="Genomic_DNA"/>
</dbReference>
<dbReference type="RefSeq" id="WP_001060526.1">
    <property type="nucleotide sequence ID" value="NC_003923.1"/>
</dbReference>
<dbReference type="SMR" id="Q8NXX7"/>
<dbReference type="KEGG" id="sam:MW0516"/>
<dbReference type="HOGENOM" id="CLU_004137_1_1_9"/>
<dbReference type="PRO" id="PR:Q8NXX7"/>
<dbReference type="GO" id="GO:0005576">
    <property type="term" value="C:extracellular region"/>
    <property type="evidence" value="ECO:0007669"/>
    <property type="project" value="UniProtKB-KW"/>
</dbReference>
<dbReference type="GO" id="GO:0007155">
    <property type="term" value="P:cell adhesion"/>
    <property type="evidence" value="ECO:0007669"/>
    <property type="project" value="InterPro"/>
</dbReference>
<dbReference type="Gene3D" id="2.60.40.1280">
    <property type="match status" value="1"/>
</dbReference>
<dbReference type="Gene3D" id="2.60.40.1290">
    <property type="match status" value="1"/>
</dbReference>
<dbReference type="Gene3D" id="2.60.40.10">
    <property type="entry name" value="Immunoglobulins"/>
    <property type="match status" value="2"/>
</dbReference>
<dbReference type="InterPro" id="IPR011266">
    <property type="entry name" value="Adhesin_Fg-bd_dom_2"/>
</dbReference>
<dbReference type="InterPro" id="IPR008966">
    <property type="entry name" value="Adhesion_dom_sf"/>
</dbReference>
<dbReference type="InterPro" id="IPR011252">
    <property type="entry name" value="Fibrogen-bd_dom1"/>
</dbReference>
<dbReference type="InterPro" id="IPR013783">
    <property type="entry name" value="Ig-like_fold"/>
</dbReference>
<dbReference type="InterPro" id="IPR019931">
    <property type="entry name" value="LPXTG_anchor"/>
</dbReference>
<dbReference type="InterPro" id="IPR050972">
    <property type="entry name" value="SDr-like"/>
</dbReference>
<dbReference type="InterPro" id="IPR033764">
    <property type="entry name" value="Sdr_B"/>
</dbReference>
<dbReference type="InterPro" id="IPR041171">
    <property type="entry name" value="SDR_Ig"/>
</dbReference>
<dbReference type="InterPro" id="IPR005877">
    <property type="entry name" value="YSIRK_signal_dom"/>
</dbReference>
<dbReference type="NCBIfam" id="TIGR01167">
    <property type="entry name" value="LPXTG_anchor"/>
    <property type="match status" value="1"/>
</dbReference>
<dbReference type="NCBIfam" id="NF000535">
    <property type="entry name" value="MSCRAMM_SdrC"/>
    <property type="match status" value="1"/>
</dbReference>
<dbReference type="NCBIfam" id="TIGR01168">
    <property type="entry name" value="YSIRK_signal"/>
    <property type="match status" value="1"/>
</dbReference>
<dbReference type="PANTHER" id="PTHR34403">
    <property type="entry name" value="TOL-PAL SYSTEM PROTEIN TOLA"/>
    <property type="match status" value="1"/>
</dbReference>
<dbReference type="PANTHER" id="PTHR34403:SF8">
    <property type="entry name" value="TOL-PAL SYSTEM PROTEIN TOLA"/>
    <property type="match status" value="1"/>
</dbReference>
<dbReference type="Pfam" id="PF17961">
    <property type="entry name" value="Big_8"/>
    <property type="match status" value="1"/>
</dbReference>
<dbReference type="Pfam" id="PF00746">
    <property type="entry name" value="Gram_pos_anchor"/>
    <property type="match status" value="1"/>
</dbReference>
<dbReference type="Pfam" id="PF17210">
    <property type="entry name" value="SdrD_B"/>
    <property type="match status" value="2"/>
</dbReference>
<dbReference type="Pfam" id="PF10425">
    <property type="entry name" value="SdrG_C_C"/>
    <property type="match status" value="1"/>
</dbReference>
<dbReference type="Pfam" id="PF04650">
    <property type="entry name" value="YSIRK_signal"/>
    <property type="match status" value="1"/>
</dbReference>
<dbReference type="SUPFAM" id="SSF49401">
    <property type="entry name" value="Bacterial adhesins"/>
    <property type="match status" value="2"/>
</dbReference>
<dbReference type="SUPFAM" id="SSF117074">
    <property type="entry name" value="Hypothetical protein PA1324"/>
    <property type="match status" value="2"/>
</dbReference>
<dbReference type="PROSITE" id="PS50847">
    <property type="entry name" value="GRAM_POS_ANCHORING"/>
    <property type="match status" value="1"/>
</dbReference>
<gene>
    <name type="primary">sdrC</name>
    <name type="ordered locus">MW0516</name>
</gene>
<keyword id="KW-0106">Calcium</keyword>
<keyword id="KW-0134">Cell wall</keyword>
<keyword id="KW-0572">Peptidoglycan-anchor</keyword>
<keyword id="KW-0677">Repeat</keyword>
<keyword id="KW-0964">Secreted</keyword>
<keyword id="KW-0732">Signal</keyword>